<keyword id="KW-0064">Aspartyl protease</keyword>
<keyword id="KW-1003">Cell membrane</keyword>
<keyword id="KW-0378">Hydrolase</keyword>
<keyword id="KW-0472">Membrane</keyword>
<keyword id="KW-0645">Protease</keyword>
<keyword id="KW-0812">Transmembrane</keyword>
<keyword id="KW-1133">Transmembrane helix</keyword>
<organism>
    <name type="scientific">Geobacillus thermodenitrificans (strain NG80-2)</name>
    <dbReference type="NCBI Taxonomy" id="420246"/>
    <lineage>
        <taxon>Bacteria</taxon>
        <taxon>Bacillati</taxon>
        <taxon>Bacillota</taxon>
        <taxon>Bacilli</taxon>
        <taxon>Bacillales</taxon>
        <taxon>Anoxybacillaceae</taxon>
        <taxon>Geobacillus</taxon>
    </lineage>
</organism>
<accession>A4IM26</accession>
<name>LSPA_GEOTN</name>
<reference key="1">
    <citation type="journal article" date="2007" name="Proc. Natl. Acad. Sci. U.S.A.">
        <title>Genome and proteome of long-chain alkane degrading Geobacillus thermodenitrificans NG80-2 isolated from a deep-subsurface oil reservoir.</title>
        <authorList>
            <person name="Feng L."/>
            <person name="Wang W."/>
            <person name="Cheng J."/>
            <person name="Ren Y."/>
            <person name="Zhao G."/>
            <person name="Gao C."/>
            <person name="Tang Y."/>
            <person name="Liu X."/>
            <person name="Han W."/>
            <person name="Peng X."/>
            <person name="Liu R."/>
            <person name="Wang L."/>
        </authorList>
    </citation>
    <scope>NUCLEOTIDE SEQUENCE [LARGE SCALE GENOMIC DNA]</scope>
    <source>
        <strain>NG80-2</strain>
    </source>
</reference>
<feature type="chain" id="PRO_1000038803" description="Lipoprotein signal peptidase">
    <location>
        <begin position="1"/>
        <end position="160"/>
    </location>
</feature>
<feature type="transmembrane region" description="Helical" evidence="1">
    <location>
        <begin position="7"/>
        <end position="27"/>
    </location>
</feature>
<feature type="transmembrane region" description="Helical" evidence="1">
    <location>
        <begin position="61"/>
        <end position="81"/>
    </location>
</feature>
<feature type="transmembrane region" description="Helical" evidence="1">
    <location>
        <begin position="91"/>
        <end position="111"/>
    </location>
</feature>
<feature type="transmembrane region" description="Helical" evidence="1">
    <location>
        <begin position="133"/>
        <end position="153"/>
    </location>
</feature>
<feature type="active site" evidence="1">
    <location>
        <position position="117"/>
    </location>
</feature>
<feature type="active site" evidence="1">
    <location>
        <position position="135"/>
    </location>
</feature>
<proteinExistence type="inferred from homology"/>
<dbReference type="EC" id="3.4.23.36" evidence="1"/>
<dbReference type="EMBL" id="CP000557">
    <property type="protein sequence ID" value="ABO66380.1"/>
    <property type="molecule type" value="Genomic_DNA"/>
</dbReference>
<dbReference type="RefSeq" id="WP_008878663.1">
    <property type="nucleotide sequence ID" value="NC_009328.1"/>
</dbReference>
<dbReference type="SMR" id="A4IM26"/>
<dbReference type="GeneID" id="87621405"/>
<dbReference type="KEGG" id="gtn:GTNG_1002"/>
<dbReference type="eggNOG" id="COG0597">
    <property type="taxonomic scope" value="Bacteria"/>
</dbReference>
<dbReference type="HOGENOM" id="CLU_083252_3_0_9"/>
<dbReference type="UniPathway" id="UPA00665"/>
<dbReference type="Proteomes" id="UP000001578">
    <property type="component" value="Chromosome"/>
</dbReference>
<dbReference type="GO" id="GO:0005886">
    <property type="term" value="C:plasma membrane"/>
    <property type="evidence" value="ECO:0007669"/>
    <property type="project" value="UniProtKB-SubCell"/>
</dbReference>
<dbReference type="GO" id="GO:0004190">
    <property type="term" value="F:aspartic-type endopeptidase activity"/>
    <property type="evidence" value="ECO:0007669"/>
    <property type="project" value="UniProtKB-UniRule"/>
</dbReference>
<dbReference type="GO" id="GO:0006508">
    <property type="term" value="P:proteolysis"/>
    <property type="evidence" value="ECO:0007669"/>
    <property type="project" value="UniProtKB-KW"/>
</dbReference>
<dbReference type="HAMAP" id="MF_00161">
    <property type="entry name" value="LspA"/>
    <property type="match status" value="1"/>
</dbReference>
<dbReference type="InterPro" id="IPR001872">
    <property type="entry name" value="Peptidase_A8"/>
</dbReference>
<dbReference type="NCBIfam" id="TIGR00077">
    <property type="entry name" value="lspA"/>
    <property type="match status" value="1"/>
</dbReference>
<dbReference type="PANTHER" id="PTHR33695">
    <property type="entry name" value="LIPOPROTEIN SIGNAL PEPTIDASE"/>
    <property type="match status" value="1"/>
</dbReference>
<dbReference type="PANTHER" id="PTHR33695:SF1">
    <property type="entry name" value="LIPOPROTEIN SIGNAL PEPTIDASE"/>
    <property type="match status" value="1"/>
</dbReference>
<dbReference type="Pfam" id="PF01252">
    <property type="entry name" value="Peptidase_A8"/>
    <property type="match status" value="1"/>
</dbReference>
<dbReference type="PRINTS" id="PR00781">
    <property type="entry name" value="LIPOSIGPTASE"/>
</dbReference>
<dbReference type="PROSITE" id="PS00855">
    <property type="entry name" value="SPASE_II"/>
    <property type="match status" value="1"/>
</dbReference>
<protein>
    <recommendedName>
        <fullName evidence="1">Lipoprotein signal peptidase</fullName>
        <ecNumber evidence="1">3.4.23.36</ecNumber>
    </recommendedName>
    <alternativeName>
        <fullName evidence="1">Prolipoprotein signal peptidase</fullName>
    </alternativeName>
    <alternativeName>
        <fullName evidence="1">Signal peptidase II</fullName>
        <shortName evidence="1">SPase II</shortName>
    </alternativeName>
</protein>
<gene>
    <name evidence="1" type="primary">lspA</name>
    <name type="ordered locus">GTNG_1002</name>
</gene>
<evidence type="ECO:0000255" key="1">
    <source>
        <dbReference type="HAMAP-Rule" id="MF_00161"/>
    </source>
</evidence>
<comment type="function">
    <text evidence="1">This protein specifically catalyzes the removal of signal peptides from prolipoproteins.</text>
</comment>
<comment type="catalytic activity">
    <reaction evidence="1">
        <text>Release of signal peptides from bacterial membrane prolipoproteins. Hydrolyzes -Xaa-Yaa-Zaa-|-(S,diacylglyceryl)Cys-, in which Xaa is hydrophobic (preferably Leu), and Yaa (Ala or Ser) and Zaa (Gly or Ala) have small, neutral side chains.</text>
        <dbReference type="EC" id="3.4.23.36"/>
    </reaction>
</comment>
<comment type="pathway">
    <text evidence="1">Protein modification; lipoprotein biosynthesis (signal peptide cleavage).</text>
</comment>
<comment type="subcellular location">
    <subcellularLocation>
        <location evidence="1">Cell membrane</location>
        <topology evidence="1">Multi-pass membrane protein</topology>
    </subcellularLocation>
</comment>
<comment type="similarity">
    <text evidence="1">Belongs to the peptidase A8 family.</text>
</comment>
<sequence>MGGFRAVIYYLLAAAVIALDQWTKWLVVRYMQLGESIPMIDNVLYITSHRNRGAAWGMLQGQFWLFYLVTVIVVAGIIIYIRRLRPSERLAGIGLGLMLGGAIGNFIDRVFRKEVVDFIHTYIGTYSFPVFNIADSALTVGVILLFIHMFFFATPEKGNE</sequence>